<accession>Q7MQJ5</accession>
<organism>
    <name type="scientific">Vibrio vulnificus (strain YJ016)</name>
    <dbReference type="NCBI Taxonomy" id="196600"/>
    <lineage>
        <taxon>Bacteria</taxon>
        <taxon>Pseudomonadati</taxon>
        <taxon>Pseudomonadota</taxon>
        <taxon>Gammaproteobacteria</taxon>
        <taxon>Vibrionales</taxon>
        <taxon>Vibrionaceae</taxon>
        <taxon>Vibrio</taxon>
    </lineage>
</organism>
<evidence type="ECO:0000255" key="1">
    <source>
        <dbReference type="HAMAP-Rule" id="MF_00365"/>
    </source>
</evidence>
<name>RECF_VIBVY</name>
<sequence>MPLSRLIIQQFRNIKACDIALSPGFNFLIGPNGSGKTSVLEAIYLLGHGRSFKSALTGRVIQNECDQLFVHGRFLNSDQFELPIGINKQRDGTTEVKIGGQSGQKLAQLAQVLPLQLIHPEGFDLLTDGPKHRRAFIDWGVFHTEPAFYDAWGRFKRLNKQRNALLKSAKSYQELSYWDKEMARLAELISQWRADYVAQMQSKAEQLCQEFLPEFHIQLKYYRGWEKETPYQQILEENFERDQTLGYTVSGPNKADLRIKVNNTPVEDVLSRGQLKLMVCALRLAQGQHLTEKTGKQCVYLIDDFASELDSQRRKRLADCLKQTGAQVFVSSITENQISDMRDDSGRLFNVEQGVIEQG</sequence>
<keyword id="KW-0067">ATP-binding</keyword>
<keyword id="KW-0963">Cytoplasm</keyword>
<keyword id="KW-0227">DNA damage</keyword>
<keyword id="KW-0234">DNA repair</keyword>
<keyword id="KW-0235">DNA replication</keyword>
<keyword id="KW-0238">DNA-binding</keyword>
<keyword id="KW-0547">Nucleotide-binding</keyword>
<keyword id="KW-0742">SOS response</keyword>
<dbReference type="EMBL" id="BA000037">
    <property type="protein sequence ID" value="BAC92777.1"/>
    <property type="molecule type" value="Genomic_DNA"/>
</dbReference>
<dbReference type="RefSeq" id="WP_011149055.1">
    <property type="nucleotide sequence ID" value="NC_005139.1"/>
</dbReference>
<dbReference type="SMR" id="Q7MQJ5"/>
<dbReference type="STRING" id="672.VV93_v1c00030"/>
<dbReference type="KEGG" id="vvy:VV0013"/>
<dbReference type="PATRIC" id="fig|196600.6.peg.67"/>
<dbReference type="eggNOG" id="COG1195">
    <property type="taxonomic scope" value="Bacteria"/>
</dbReference>
<dbReference type="HOGENOM" id="CLU_040267_0_0_6"/>
<dbReference type="Proteomes" id="UP000002675">
    <property type="component" value="Chromosome I"/>
</dbReference>
<dbReference type="GO" id="GO:0005737">
    <property type="term" value="C:cytoplasm"/>
    <property type="evidence" value="ECO:0007669"/>
    <property type="project" value="UniProtKB-SubCell"/>
</dbReference>
<dbReference type="GO" id="GO:0005524">
    <property type="term" value="F:ATP binding"/>
    <property type="evidence" value="ECO:0007669"/>
    <property type="project" value="UniProtKB-UniRule"/>
</dbReference>
<dbReference type="GO" id="GO:0003697">
    <property type="term" value="F:single-stranded DNA binding"/>
    <property type="evidence" value="ECO:0007669"/>
    <property type="project" value="UniProtKB-UniRule"/>
</dbReference>
<dbReference type="GO" id="GO:0006260">
    <property type="term" value="P:DNA replication"/>
    <property type="evidence" value="ECO:0007669"/>
    <property type="project" value="UniProtKB-UniRule"/>
</dbReference>
<dbReference type="GO" id="GO:0000731">
    <property type="term" value="P:DNA synthesis involved in DNA repair"/>
    <property type="evidence" value="ECO:0007669"/>
    <property type="project" value="TreeGrafter"/>
</dbReference>
<dbReference type="GO" id="GO:0006302">
    <property type="term" value="P:double-strand break repair"/>
    <property type="evidence" value="ECO:0007669"/>
    <property type="project" value="TreeGrafter"/>
</dbReference>
<dbReference type="GO" id="GO:0009432">
    <property type="term" value="P:SOS response"/>
    <property type="evidence" value="ECO:0007669"/>
    <property type="project" value="UniProtKB-UniRule"/>
</dbReference>
<dbReference type="FunFam" id="1.20.1050.90:FF:000001">
    <property type="entry name" value="DNA replication and repair protein RecF"/>
    <property type="match status" value="1"/>
</dbReference>
<dbReference type="Gene3D" id="3.40.50.300">
    <property type="entry name" value="P-loop containing nucleotide triphosphate hydrolases"/>
    <property type="match status" value="1"/>
</dbReference>
<dbReference type="Gene3D" id="1.20.1050.90">
    <property type="entry name" value="RecF/RecN/SMC, N-terminal domain"/>
    <property type="match status" value="1"/>
</dbReference>
<dbReference type="HAMAP" id="MF_00365">
    <property type="entry name" value="RecF"/>
    <property type="match status" value="1"/>
</dbReference>
<dbReference type="InterPro" id="IPR001238">
    <property type="entry name" value="DNA-binding_RecF"/>
</dbReference>
<dbReference type="InterPro" id="IPR018078">
    <property type="entry name" value="DNA-binding_RecF_CS"/>
</dbReference>
<dbReference type="InterPro" id="IPR027417">
    <property type="entry name" value="P-loop_NTPase"/>
</dbReference>
<dbReference type="InterPro" id="IPR003395">
    <property type="entry name" value="RecF/RecN/SMC_N"/>
</dbReference>
<dbReference type="InterPro" id="IPR042174">
    <property type="entry name" value="RecF_2"/>
</dbReference>
<dbReference type="NCBIfam" id="TIGR00611">
    <property type="entry name" value="recf"/>
    <property type="match status" value="1"/>
</dbReference>
<dbReference type="PANTHER" id="PTHR32182">
    <property type="entry name" value="DNA REPLICATION AND REPAIR PROTEIN RECF"/>
    <property type="match status" value="1"/>
</dbReference>
<dbReference type="PANTHER" id="PTHR32182:SF0">
    <property type="entry name" value="DNA REPLICATION AND REPAIR PROTEIN RECF"/>
    <property type="match status" value="1"/>
</dbReference>
<dbReference type="Pfam" id="PF02463">
    <property type="entry name" value="SMC_N"/>
    <property type="match status" value="1"/>
</dbReference>
<dbReference type="SUPFAM" id="SSF52540">
    <property type="entry name" value="P-loop containing nucleoside triphosphate hydrolases"/>
    <property type="match status" value="1"/>
</dbReference>
<dbReference type="PROSITE" id="PS00617">
    <property type="entry name" value="RECF_1"/>
    <property type="match status" value="1"/>
</dbReference>
<dbReference type="PROSITE" id="PS00618">
    <property type="entry name" value="RECF_2"/>
    <property type="match status" value="1"/>
</dbReference>
<gene>
    <name evidence="1" type="primary">recF</name>
    <name type="ordered locus">VV0013</name>
</gene>
<proteinExistence type="inferred from homology"/>
<feature type="chain" id="PRO_0000196488" description="DNA replication and repair protein RecF">
    <location>
        <begin position="1"/>
        <end position="359"/>
    </location>
</feature>
<feature type="binding site" evidence="1">
    <location>
        <begin position="30"/>
        <end position="37"/>
    </location>
    <ligand>
        <name>ATP</name>
        <dbReference type="ChEBI" id="CHEBI:30616"/>
    </ligand>
</feature>
<comment type="function">
    <text evidence="1">The RecF protein is involved in DNA metabolism; it is required for DNA replication and normal SOS inducibility. RecF binds preferentially to single-stranded, linear DNA. It also seems to bind ATP.</text>
</comment>
<comment type="subcellular location">
    <subcellularLocation>
        <location evidence="1">Cytoplasm</location>
    </subcellularLocation>
</comment>
<comment type="similarity">
    <text evidence="1">Belongs to the RecF family.</text>
</comment>
<reference key="1">
    <citation type="journal article" date="2003" name="Genome Res.">
        <title>Comparative genome analysis of Vibrio vulnificus, a marine pathogen.</title>
        <authorList>
            <person name="Chen C.-Y."/>
            <person name="Wu K.-M."/>
            <person name="Chang Y.-C."/>
            <person name="Chang C.-H."/>
            <person name="Tsai H.-C."/>
            <person name="Liao T.-L."/>
            <person name="Liu Y.-M."/>
            <person name="Chen H.-J."/>
            <person name="Shen A.B.-T."/>
            <person name="Li J.-C."/>
            <person name="Su T.-L."/>
            <person name="Shao C.-P."/>
            <person name="Lee C.-T."/>
            <person name="Hor L.-I."/>
            <person name="Tsai S.-F."/>
        </authorList>
    </citation>
    <scope>NUCLEOTIDE SEQUENCE [LARGE SCALE GENOMIC DNA]</scope>
    <source>
        <strain>YJ016</strain>
    </source>
</reference>
<protein>
    <recommendedName>
        <fullName evidence="1">DNA replication and repair protein RecF</fullName>
    </recommendedName>
</protein>